<dbReference type="EC" id="6.1.1.17" evidence="1"/>
<dbReference type="EMBL" id="CU468135">
    <property type="protein sequence ID" value="CAO96153.1"/>
    <property type="molecule type" value="Genomic_DNA"/>
</dbReference>
<dbReference type="RefSeq" id="WP_012440853.1">
    <property type="nucleotide sequence ID" value="NC_010694.1"/>
</dbReference>
<dbReference type="SMR" id="B2VDY5"/>
<dbReference type="STRING" id="465817.ETA_11070"/>
<dbReference type="KEGG" id="eta:ETA_11070"/>
<dbReference type="eggNOG" id="COG0008">
    <property type="taxonomic scope" value="Bacteria"/>
</dbReference>
<dbReference type="HOGENOM" id="CLU_015768_6_0_6"/>
<dbReference type="OrthoDB" id="9807503at2"/>
<dbReference type="Proteomes" id="UP000001726">
    <property type="component" value="Chromosome"/>
</dbReference>
<dbReference type="GO" id="GO:0005829">
    <property type="term" value="C:cytosol"/>
    <property type="evidence" value="ECO:0007669"/>
    <property type="project" value="TreeGrafter"/>
</dbReference>
<dbReference type="GO" id="GO:0005524">
    <property type="term" value="F:ATP binding"/>
    <property type="evidence" value="ECO:0007669"/>
    <property type="project" value="UniProtKB-UniRule"/>
</dbReference>
<dbReference type="GO" id="GO:0004818">
    <property type="term" value="F:glutamate-tRNA ligase activity"/>
    <property type="evidence" value="ECO:0007669"/>
    <property type="project" value="UniProtKB-UniRule"/>
</dbReference>
<dbReference type="GO" id="GO:0000049">
    <property type="term" value="F:tRNA binding"/>
    <property type="evidence" value="ECO:0007669"/>
    <property type="project" value="InterPro"/>
</dbReference>
<dbReference type="GO" id="GO:0008270">
    <property type="term" value="F:zinc ion binding"/>
    <property type="evidence" value="ECO:0007669"/>
    <property type="project" value="UniProtKB-UniRule"/>
</dbReference>
<dbReference type="GO" id="GO:0006424">
    <property type="term" value="P:glutamyl-tRNA aminoacylation"/>
    <property type="evidence" value="ECO:0007669"/>
    <property type="project" value="UniProtKB-UniRule"/>
</dbReference>
<dbReference type="CDD" id="cd00808">
    <property type="entry name" value="GluRS_core"/>
    <property type="match status" value="1"/>
</dbReference>
<dbReference type="FunFam" id="1.10.10.350:FF:000001">
    <property type="entry name" value="Glutamate--tRNA ligase"/>
    <property type="match status" value="1"/>
</dbReference>
<dbReference type="FunFam" id="3.40.50.620:FF:000007">
    <property type="entry name" value="Glutamate--tRNA ligase"/>
    <property type="match status" value="1"/>
</dbReference>
<dbReference type="Gene3D" id="1.10.10.350">
    <property type="match status" value="1"/>
</dbReference>
<dbReference type="Gene3D" id="3.40.50.620">
    <property type="entry name" value="HUPs"/>
    <property type="match status" value="1"/>
</dbReference>
<dbReference type="HAMAP" id="MF_00022">
    <property type="entry name" value="Glu_tRNA_synth_type1"/>
    <property type="match status" value="1"/>
</dbReference>
<dbReference type="InterPro" id="IPR045462">
    <property type="entry name" value="aa-tRNA-synth_I_cd-bd"/>
</dbReference>
<dbReference type="InterPro" id="IPR020751">
    <property type="entry name" value="aa-tRNA-synth_I_codon-bd_sub2"/>
</dbReference>
<dbReference type="InterPro" id="IPR001412">
    <property type="entry name" value="aa-tRNA-synth_I_CS"/>
</dbReference>
<dbReference type="InterPro" id="IPR008925">
    <property type="entry name" value="aa_tRNA-synth_I_cd-bd_sf"/>
</dbReference>
<dbReference type="InterPro" id="IPR004527">
    <property type="entry name" value="Glu-tRNA-ligase_bac/mito"/>
</dbReference>
<dbReference type="InterPro" id="IPR000924">
    <property type="entry name" value="Glu/Gln-tRNA-synth"/>
</dbReference>
<dbReference type="InterPro" id="IPR020058">
    <property type="entry name" value="Glu/Gln-tRNA-synth_Ib_cat-dom"/>
</dbReference>
<dbReference type="InterPro" id="IPR049940">
    <property type="entry name" value="GluQ/Sye"/>
</dbReference>
<dbReference type="InterPro" id="IPR033910">
    <property type="entry name" value="GluRS_core"/>
</dbReference>
<dbReference type="InterPro" id="IPR014729">
    <property type="entry name" value="Rossmann-like_a/b/a_fold"/>
</dbReference>
<dbReference type="NCBIfam" id="TIGR00464">
    <property type="entry name" value="gltX_bact"/>
    <property type="match status" value="1"/>
</dbReference>
<dbReference type="PANTHER" id="PTHR43311">
    <property type="entry name" value="GLUTAMATE--TRNA LIGASE"/>
    <property type="match status" value="1"/>
</dbReference>
<dbReference type="PANTHER" id="PTHR43311:SF2">
    <property type="entry name" value="GLUTAMATE--TRNA LIGASE, MITOCHONDRIAL-RELATED"/>
    <property type="match status" value="1"/>
</dbReference>
<dbReference type="Pfam" id="PF19269">
    <property type="entry name" value="Anticodon_2"/>
    <property type="match status" value="1"/>
</dbReference>
<dbReference type="Pfam" id="PF00749">
    <property type="entry name" value="tRNA-synt_1c"/>
    <property type="match status" value="1"/>
</dbReference>
<dbReference type="PRINTS" id="PR00987">
    <property type="entry name" value="TRNASYNTHGLU"/>
</dbReference>
<dbReference type="SUPFAM" id="SSF48163">
    <property type="entry name" value="An anticodon-binding domain of class I aminoacyl-tRNA synthetases"/>
    <property type="match status" value="1"/>
</dbReference>
<dbReference type="SUPFAM" id="SSF52374">
    <property type="entry name" value="Nucleotidylyl transferase"/>
    <property type="match status" value="1"/>
</dbReference>
<dbReference type="PROSITE" id="PS00178">
    <property type="entry name" value="AA_TRNA_LIGASE_I"/>
    <property type="match status" value="1"/>
</dbReference>
<gene>
    <name evidence="1" type="primary">gltX</name>
    <name type="ordered locus">ETA_11070</name>
</gene>
<reference key="1">
    <citation type="journal article" date="2008" name="Environ. Microbiol.">
        <title>The genome of Erwinia tasmaniensis strain Et1/99, a non-pathogenic bacterium in the genus Erwinia.</title>
        <authorList>
            <person name="Kube M."/>
            <person name="Migdoll A.M."/>
            <person name="Mueller I."/>
            <person name="Kuhl H."/>
            <person name="Beck A."/>
            <person name="Reinhardt R."/>
            <person name="Geider K."/>
        </authorList>
    </citation>
    <scope>NUCLEOTIDE SEQUENCE [LARGE SCALE GENOMIC DNA]</scope>
    <source>
        <strain>DSM 17950 / CFBP 7177 / CIP 109463 / NCPPB 4357 / Et1/99</strain>
    </source>
</reference>
<accession>B2VDY5</accession>
<comment type="function">
    <text evidence="1">Catalyzes the attachment of glutamate to tRNA(Glu) in a two-step reaction: glutamate is first activated by ATP to form Glu-AMP and then transferred to the acceptor end of tRNA(Glu).</text>
</comment>
<comment type="catalytic activity">
    <reaction evidence="1">
        <text>tRNA(Glu) + L-glutamate + ATP = L-glutamyl-tRNA(Glu) + AMP + diphosphate</text>
        <dbReference type="Rhea" id="RHEA:23540"/>
        <dbReference type="Rhea" id="RHEA-COMP:9663"/>
        <dbReference type="Rhea" id="RHEA-COMP:9680"/>
        <dbReference type="ChEBI" id="CHEBI:29985"/>
        <dbReference type="ChEBI" id="CHEBI:30616"/>
        <dbReference type="ChEBI" id="CHEBI:33019"/>
        <dbReference type="ChEBI" id="CHEBI:78442"/>
        <dbReference type="ChEBI" id="CHEBI:78520"/>
        <dbReference type="ChEBI" id="CHEBI:456215"/>
        <dbReference type="EC" id="6.1.1.17"/>
    </reaction>
</comment>
<comment type="cofactor">
    <cofactor evidence="1">
        <name>Zn(2+)</name>
        <dbReference type="ChEBI" id="CHEBI:29105"/>
    </cofactor>
    <text evidence="1">Binds 1 zinc ion per subunit.</text>
</comment>
<comment type="subunit">
    <text evidence="1">Monomer.</text>
</comment>
<comment type="subcellular location">
    <subcellularLocation>
        <location evidence="1">Cytoplasm</location>
    </subcellularLocation>
</comment>
<comment type="similarity">
    <text evidence="1">Belongs to the class-I aminoacyl-tRNA synthetase family. Glutamate--tRNA ligase type 1 subfamily.</text>
</comment>
<organism>
    <name type="scientific">Erwinia tasmaniensis (strain DSM 17950 / CFBP 7177 / CIP 109463 / NCPPB 4357 / Et1/99)</name>
    <dbReference type="NCBI Taxonomy" id="465817"/>
    <lineage>
        <taxon>Bacteria</taxon>
        <taxon>Pseudomonadati</taxon>
        <taxon>Pseudomonadota</taxon>
        <taxon>Gammaproteobacteria</taxon>
        <taxon>Enterobacterales</taxon>
        <taxon>Erwiniaceae</taxon>
        <taxon>Erwinia</taxon>
    </lineage>
</organism>
<feature type="chain" id="PRO_1000090075" description="Glutamate--tRNA ligase">
    <location>
        <begin position="1"/>
        <end position="469"/>
    </location>
</feature>
<feature type="short sequence motif" description="'HIGH' region" evidence="1">
    <location>
        <begin position="9"/>
        <end position="19"/>
    </location>
</feature>
<feature type="short sequence motif" description="'KMSKS' region" evidence="1">
    <location>
        <begin position="237"/>
        <end position="241"/>
    </location>
</feature>
<feature type="binding site" evidence="1">
    <location>
        <position position="98"/>
    </location>
    <ligand>
        <name>Zn(2+)</name>
        <dbReference type="ChEBI" id="CHEBI:29105"/>
    </ligand>
</feature>
<feature type="binding site" evidence="1">
    <location>
        <position position="100"/>
    </location>
    <ligand>
        <name>Zn(2+)</name>
        <dbReference type="ChEBI" id="CHEBI:29105"/>
    </ligand>
</feature>
<feature type="binding site" evidence="1">
    <location>
        <position position="125"/>
    </location>
    <ligand>
        <name>Zn(2+)</name>
        <dbReference type="ChEBI" id="CHEBI:29105"/>
    </ligand>
</feature>
<feature type="binding site" evidence="1">
    <location>
        <position position="127"/>
    </location>
    <ligand>
        <name>Zn(2+)</name>
        <dbReference type="ChEBI" id="CHEBI:29105"/>
    </ligand>
</feature>
<feature type="binding site" evidence="1">
    <location>
        <position position="240"/>
    </location>
    <ligand>
        <name>ATP</name>
        <dbReference type="ChEBI" id="CHEBI:30616"/>
    </ligand>
</feature>
<proteinExistence type="inferred from homology"/>
<keyword id="KW-0030">Aminoacyl-tRNA synthetase</keyword>
<keyword id="KW-0067">ATP-binding</keyword>
<keyword id="KW-0963">Cytoplasm</keyword>
<keyword id="KW-0436">Ligase</keyword>
<keyword id="KW-0479">Metal-binding</keyword>
<keyword id="KW-0547">Nucleotide-binding</keyword>
<keyword id="KW-0648">Protein biosynthesis</keyword>
<keyword id="KW-1185">Reference proteome</keyword>
<keyword id="KW-0862">Zinc</keyword>
<evidence type="ECO:0000255" key="1">
    <source>
        <dbReference type="HAMAP-Rule" id="MF_00022"/>
    </source>
</evidence>
<sequence>MKIKTRFAPSPTGYLHVGGARTALYSWLFARNHGGEFVLRIEDTDLERSTQQAIDAIMDGMNWLNLDWDEGPYYQTKRFDRYNTVIDQMLEAGSAYKCYCSKERLETLRENQMANGEKPRYDGRCRDGHEHHAENEPCVVRFRNPQEGSVIFDDQIRGPIEFSNQELDDLIIRRTDGAPTYNFCVVIDDWDMEITHVIRGEDHINNTPRQINILKAIGAQVPVYAHVSMILGDDGKKLSKRHGAVGVMQYRDDGYLPEALLNYLVRLGWSHGDQEIFSIDEMKKLFELDVVSKSASAFNTEKLQWLNHHYINSLAPEYVATHLQWHIEQENIDTRTGPQLAQLVKLLGERCKTLKEMAASCRYFYEEFDEFDADAAKKHLRPVARQPLEVVRDKLAAMSDWTAEGVHQAIQAAADELEVGMGKVGMPLRVAVTGAGQSPALDVTVHAIGQARSVARIEKALAYIATREA</sequence>
<protein>
    <recommendedName>
        <fullName evidence="1">Glutamate--tRNA ligase</fullName>
        <ecNumber evidence="1">6.1.1.17</ecNumber>
    </recommendedName>
    <alternativeName>
        <fullName evidence="1">Glutamyl-tRNA synthetase</fullName>
        <shortName evidence="1">GluRS</shortName>
    </alternativeName>
</protein>
<name>SYE_ERWT9</name>